<organism>
    <name type="scientific">Salmonella gallinarum (strain 287/91 / NCTC 13346)</name>
    <dbReference type="NCBI Taxonomy" id="550538"/>
    <lineage>
        <taxon>Bacteria</taxon>
        <taxon>Pseudomonadati</taxon>
        <taxon>Pseudomonadota</taxon>
        <taxon>Gammaproteobacteria</taxon>
        <taxon>Enterobacterales</taxon>
        <taxon>Enterobacteriaceae</taxon>
        <taxon>Salmonella</taxon>
    </lineage>
</organism>
<protein>
    <recommendedName>
        <fullName evidence="1">Large ribosomal subunit protein uL30</fullName>
    </recommendedName>
    <alternativeName>
        <fullName evidence="2">50S ribosomal protein L30</fullName>
    </alternativeName>
</protein>
<comment type="subunit">
    <text evidence="1">Part of the 50S ribosomal subunit.</text>
</comment>
<comment type="similarity">
    <text evidence="1">Belongs to the universal ribosomal protein uL30 family.</text>
</comment>
<gene>
    <name evidence="1" type="primary">rpmD</name>
    <name type="ordered locus">SG4017</name>
</gene>
<keyword id="KW-0687">Ribonucleoprotein</keyword>
<keyword id="KW-0689">Ribosomal protein</keyword>
<evidence type="ECO:0000255" key="1">
    <source>
        <dbReference type="HAMAP-Rule" id="MF_01371"/>
    </source>
</evidence>
<evidence type="ECO:0000305" key="2"/>
<accession>B5RH33</accession>
<reference key="1">
    <citation type="journal article" date="2008" name="Genome Res.">
        <title>Comparative genome analysis of Salmonella enteritidis PT4 and Salmonella gallinarum 287/91 provides insights into evolutionary and host adaptation pathways.</title>
        <authorList>
            <person name="Thomson N.R."/>
            <person name="Clayton D.J."/>
            <person name="Windhorst D."/>
            <person name="Vernikos G."/>
            <person name="Davidson S."/>
            <person name="Churcher C."/>
            <person name="Quail M.A."/>
            <person name="Stevens M."/>
            <person name="Jones M.A."/>
            <person name="Watson M."/>
            <person name="Barron A."/>
            <person name="Layton A."/>
            <person name="Pickard D."/>
            <person name="Kingsley R.A."/>
            <person name="Bignell A."/>
            <person name="Clark L."/>
            <person name="Harris B."/>
            <person name="Ormond D."/>
            <person name="Abdellah Z."/>
            <person name="Brooks K."/>
            <person name="Cherevach I."/>
            <person name="Chillingworth T."/>
            <person name="Woodward J."/>
            <person name="Norberczak H."/>
            <person name="Lord A."/>
            <person name="Arrowsmith C."/>
            <person name="Jagels K."/>
            <person name="Moule S."/>
            <person name="Mungall K."/>
            <person name="Saunders M."/>
            <person name="Whitehead S."/>
            <person name="Chabalgoity J.A."/>
            <person name="Maskell D."/>
            <person name="Humphreys T."/>
            <person name="Roberts M."/>
            <person name="Barrow P.A."/>
            <person name="Dougan G."/>
            <person name="Parkhill J."/>
        </authorList>
    </citation>
    <scope>NUCLEOTIDE SEQUENCE [LARGE SCALE GENOMIC DNA]</scope>
    <source>
        <strain>287/91 / NCTC 13346</strain>
    </source>
</reference>
<proteinExistence type="inferred from homology"/>
<dbReference type="EMBL" id="AM933173">
    <property type="protein sequence ID" value="CAR39787.1"/>
    <property type="molecule type" value="Genomic_DNA"/>
</dbReference>
<dbReference type="RefSeq" id="WP_001140434.1">
    <property type="nucleotide sequence ID" value="NC_011274.1"/>
</dbReference>
<dbReference type="SMR" id="B5RH33"/>
<dbReference type="GeneID" id="97393185"/>
<dbReference type="KEGG" id="seg:SG4017"/>
<dbReference type="HOGENOM" id="CLU_131047_1_4_6"/>
<dbReference type="Proteomes" id="UP000008321">
    <property type="component" value="Chromosome"/>
</dbReference>
<dbReference type="GO" id="GO:0022625">
    <property type="term" value="C:cytosolic large ribosomal subunit"/>
    <property type="evidence" value="ECO:0007669"/>
    <property type="project" value="TreeGrafter"/>
</dbReference>
<dbReference type="GO" id="GO:0003735">
    <property type="term" value="F:structural constituent of ribosome"/>
    <property type="evidence" value="ECO:0007669"/>
    <property type="project" value="InterPro"/>
</dbReference>
<dbReference type="GO" id="GO:0006412">
    <property type="term" value="P:translation"/>
    <property type="evidence" value="ECO:0007669"/>
    <property type="project" value="UniProtKB-UniRule"/>
</dbReference>
<dbReference type="CDD" id="cd01658">
    <property type="entry name" value="Ribosomal_L30"/>
    <property type="match status" value="1"/>
</dbReference>
<dbReference type="FunFam" id="3.30.1390.20:FF:000001">
    <property type="entry name" value="50S ribosomal protein L30"/>
    <property type="match status" value="1"/>
</dbReference>
<dbReference type="Gene3D" id="3.30.1390.20">
    <property type="entry name" value="Ribosomal protein L30, ferredoxin-like fold domain"/>
    <property type="match status" value="1"/>
</dbReference>
<dbReference type="HAMAP" id="MF_01371_B">
    <property type="entry name" value="Ribosomal_uL30_B"/>
    <property type="match status" value="1"/>
</dbReference>
<dbReference type="InterPro" id="IPR036919">
    <property type="entry name" value="Ribo_uL30_ferredoxin-like_sf"/>
</dbReference>
<dbReference type="InterPro" id="IPR005996">
    <property type="entry name" value="Ribosomal_uL30_bac-type"/>
</dbReference>
<dbReference type="InterPro" id="IPR018038">
    <property type="entry name" value="Ribosomal_uL30_CS"/>
</dbReference>
<dbReference type="InterPro" id="IPR016082">
    <property type="entry name" value="Ribosomal_uL30_ferredoxin-like"/>
</dbReference>
<dbReference type="NCBIfam" id="TIGR01308">
    <property type="entry name" value="rpmD_bact"/>
    <property type="match status" value="1"/>
</dbReference>
<dbReference type="PANTHER" id="PTHR15892:SF2">
    <property type="entry name" value="LARGE RIBOSOMAL SUBUNIT PROTEIN UL30M"/>
    <property type="match status" value="1"/>
</dbReference>
<dbReference type="PANTHER" id="PTHR15892">
    <property type="entry name" value="MITOCHONDRIAL RIBOSOMAL PROTEIN L30"/>
    <property type="match status" value="1"/>
</dbReference>
<dbReference type="Pfam" id="PF00327">
    <property type="entry name" value="Ribosomal_L30"/>
    <property type="match status" value="1"/>
</dbReference>
<dbReference type="PIRSF" id="PIRSF002211">
    <property type="entry name" value="Ribosomal_L30_bac-type"/>
    <property type="match status" value="1"/>
</dbReference>
<dbReference type="SUPFAM" id="SSF55129">
    <property type="entry name" value="Ribosomal protein L30p/L7e"/>
    <property type="match status" value="1"/>
</dbReference>
<dbReference type="PROSITE" id="PS00634">
    <property type="entry name" value="RIBOSOMAL_L30"/>
    <property type="match status" value="1"/>
</dbReference>
<name>RL30_SALG2</name>
<feature type="chain" id="PRO_1000144713" description="Large ribosomal subunit protein uL30">
    <location>
        <begin position="1"/>
        <end position="59"/>
    </location>
</feature>
<sequence length="59" mass="6514">MAKTIKITQTRSAIGRLPKHKATLLGLGLRRIGHTVEREDTPAVRGMVNAVSFMVKVEE</sequence>